<gene>
    <name evidence="1" type="primary">cheD</name>
    <name type="ordered locus">BURPS1710b_0072</name>
</gene>
<accession>Q3JY64</accession>
<comment type="function">
    <text evidence="1">Probably deamidates glutamine residues to glutamate on methyl-accepting chemotaxis receptors (MCPs), playing an important role in chemotaxis.</text>
</comment>
<comment type="catalytic activity">
    <reaction evidence="1">
        <text>L-glutaminyl-[protein] + H2O = L-glutamyl-[protein] + NH4(+)</text>
        <dbReference type="Rhea" id="RHEA:16441"/>
        <dbReference type="Rhea" id="RHEA-COMP:10207"/>
        <dbReference type="Rhea" id="RHEA-COMP:10208"/>
        <dbReference type="ChEBI" id="CHEBI:15377"/>
        <dbReference type="ChEBI" id="CHEBI:28938"/>
        <dbReference type="ChEBI" id="CHEBI:29973"/>
        <dbReference type="ChEBI" id="CHEBI:30011"/>
        <dbReference type="EC" id="3.5.1.44"/>
    </reaction>
</comment>
<comment type="similarity">
    <text evidence="1">Belongs to the CheD family.</text>
</comment>
<keyword id="KW-0145">Chemotaxis</keyword>
<keyword id="KW-0378">Hydrolase</keyword>
<evidence type="ECO:0000255" key="1">
    <source>
        <dbReference type="HAMAP-Rule" id="MF_01440"/>
    </source>
</evidence>
<sequence>MSGLPIATNLYFDAHFHRHGVKLLPNEFYTTREDMVLVTVLGSCVAACLHDPIGRIGGMNHFMLPDDGADPSAAASESMRYGAYAMEVLINELIKAGGRRERFEAKVFGGAAVLAGMTTINIGDRNADFVRRYLALERIRITAEDLQGVHPRKVAFMPHTGQAMVKKLRVQAPDVAAREAALAREAVDPHGERAPRVRPRVELFGTPAPKAQAKPRIELFGMRAMQPATRKQEA</sequence>
<organism>
    <name type="scientific">Burkholderia pseudomallei (strain 1710b)</name>
    <dbReference type="NCBI Taxonomy" id="320372"/>
    <lineage>
        <taxon>Bacteria</taxon>
        <taxon>Pseudomonadati</taxon>
        <taxon>Pseudomonadota</taxon>
        <taxon>Betaproteobacteria</taxon>
        <taxon>Burkholderiales</taxon>
        <taxon>Burkholderiaceae</taxon>
        <taxon>Burkholderia</taxon>
        <taxon>pseudomallei group</taxon>
    </lineage>
</organism>
<name>CHED_BURP1</name>
<feature type="chain" id="PRO_0000251015" description="Probable chemoreceptor glutamine deamidase CheD">
    <location>
        <begin position="1"/>
        <end position="234"/>
    </location>
</feature>
<dbReference type="EC" id="3.5.1.44" evidence="1"/>
<dbReference type="EMBL" id="CP000124">
    <property type="protein sequence ID" value="ABA49527.1"/>
    <property type="molecule type" value="Genomic_DNA"/>
</dbReference>
<dbReference type="RefSeq" id="WP_004524404.1">
    <property type="nucleotide sequence ID" value="NC_007434.1"/>
</dbReference>
<dbReference type="SMR" id="Q3JY64"/>
<dbReference type="EnsemblBacteria" id="ABA49527">
    <property type="protein sequence ID" value="ABA49527"/>
    <property type="gene ID" value="BURPS1710b_0072"/>
</dbReference>
<dbReference type="GeneID" id="93061923"/>
<dbReference type="KEGG" id="bpm:BURPS1710b_0072"/>
<dbReference type="HOGENOM" id="CLU_087854_0_0_4"/>
<dbReference type="Proteomes" id="UP000002700">
    <property type="component" value="Chromosome I"/>
</dbReference>
<dbReference type="GO" id="GO:0050568">
    <property type="term" value="F:protein-glutamine glutaminase activity"/>
    <property type="evidence" value="ECO:0007669"/>
    <property type="project" value="UniProtKB-UniRule"/>
</dbReference>
<dbReference type="GO" id="GO:0006935">
    <property type="term" value="P:chemotaxis"/>
    <property type="evidence" value="ECO:0007669"/>
    <property type="project" value="UniProtKB-UniRule"/>
</dbReference>
<dbReference type="CDD" id="cd16352">
    <property type="entry name" value="CheD"/>
    <property type="match status" value="1"/>
</dbReference>
<dbReference type="Gene3D" id="3.30.1330.200">
    <property type="match status" value="1"/>
</dbReference>
<dbReference type="HAMAP" id="MF_01440">
    <property type="entry name" value="CheD"/>
    <property type="match status" value="1"/>
</dbReference>
<dbReference type="InterPro" id="IPR038592">
    <property type="entry name" value="CheD-like_sf"/>
</dbReference>
<dbReference type="InterPro" id="IPR005659">
    <property type="entry name" value="Chemorcpt_Glu_NH3ase_CheD"/>
</dbReference>
<dbReference type="InterPro" id="IPR011324">
    <property type="entry name" value="Cytotoxic_necrot_fac-like_cat"/>
</dbReference>
<dbReference type="NCBIfam" id="NF010013">
    <property type="entry name" value="PRK13487.1"/>
    <property type="match status" value="1"/>
</dbReference>
<dbReference type="NCBIfam" id="NF010014">
    <property type="entry name" value="PRK13489.1"/>
    <property type="match status" value="1"/>
</dbReference>
<dbReference type="PANTHER" id="PTHR35147">
    <property type="entry name" value="CHEMORECEPTOR GLUTAMINE DEAMIDASE CHED-RELATED"/>
    <property type="match status" value="1"/>
</dbReference>
<dbReference type="PANTHER" id="PTHR35147:SF2">
    <property type="entry name" value="CHEMORECEPTOR GLUTAMINE DEAMIDASE CHED-RELATED"/>
    <property type="match status" value="1"/>
</dbReference>
<dbReference type="Pfam" id="PF03975">
    <property type="entry name" value="CheD"/>
    <property type="match status" value="1"/>
</dbReference>
<dbReference type="SUPFAM" id="SSF64438">
    <property type="entry name" value="CNF1/YfiH-like putative cysteine hydrolases"/>
    <property type="match status" value="1"/>
</dbReference>
<proteinExistence type="inferred from homology"/>
<protein>
    <recommendedName>
        <fullName evidence="1">Probable chemoreceptor glutamine deamidase CheD</fullName>
        <ecNumber evidence="1">3.5.1.44</ecNumber>
    </recommendedName>
</protein>
<reference key="1">
    <citation type="journal article" date="2010" name="Genome Biol. Evol.">
        <title>Continuing evolution of Burkholderia mallei through genome reduction and large-scale rearrangements.</title>
        <authorList>
            <person name="Losada L."/>
            <person name="Ronning C.M."/>
            <person name="DeShazer D."/>
            <person name="Woods D."/>
            <person name="Fedorova N."/>
            <person name="Kim H.S."/>
            <person name="Shabalina S.A."/>
            <person name="Pearson T.R."/>
            <person name="Brinkac L."/>
            <person name="Tan P."/>
            <person name="Nandi T."/>
            <person name="Crabtree J."/>
            <person name="Badger J."/>
            <person name="Beckstrom-Sternberg S."/>
            <person name="Saqib M."/>
            <person name="Schutzer S.E."/>
            <person name="Keim P."/>
            <person name="Nierman W.C."/>
        </authorList>
    </citation>
    <scope>NUCLEOTIDE SEQUENCE [LARGE SCALE GENOMIC DNA]</scope>
    <source>
        <strain>1710b</strain>
    </source>
</reference>